<reference key="1">
    <citation type="journal article" date="1996" name="Science">
        <title>Complete genome sequence of the methanogenic archaeon, Methanococcus jannaschii.</title>
        <authorList>
            <person name="Bult C.J."/>
            <person name="White O."/>
            <person name="Olsen G.J."/>
            <person name="Zhou L."/>
            <person name="Fleischmann R.D."/>
            <person name="Sutton G.G."/>
            <person name="Blake J.A."/>
            <person name="FitzGerald L.M."/>
            <person name="Clayton R.A."/>
            <person name="Gocayne J.D."/>
            <person name="Kerlavage A.R."/>
            <person name="Dougherty B.A."/>
            <person name="Tomb J.-F."/>
            <person name="Adams M.D."/>
            <person name="Reich C.I."/>
            <person name="Overbeek R."/>
            <person name="Kirkness E.F."/>
            <person name="Weinstock K.G."/>
            <person name="Merrick J.M."/>
            <person name="Glodek A."/>
            <person name="Scott J.L."/>
            <person name="Geoghagen N.S.M."/>
            <person name="Weidman J.F."/>
            <person name="Fuhrmann J.L."/>
            <person name="Nguyen D."/>
            <person name="Utterback T.R."/>
            <person name="Kelley J.M."/>
            <person name="Peterson J.D."/>
            <person name="Sadow P.W."/>
            <person name="Hanna M.C."/>
            <person name="Cotton M.D."/>
            <person name="Roberts K.M."/>
            <person name="Hurst M.A."/>
            <person name="Kaine B.P."/>
            <person name="Borodovsky M."/>
            <person name="Klenk H.-P."/>
            <person name="Fraser C.M."/>
            <person name="Smith H.O."/>
            <person name="Woese C.R."/>
            <person name="Venter J.C."/>
        </authorList>
    </citation>
    <scope>NUCLEOTIDE SEQUENCE [LARGE SCALE GENOMIC DNA]</scope>
    <source>
        <strain>ATCC 43067 / DSM 2661 / JAL-1 / JCM 10045 / NBRC 100440</strain>
    </source>
</reference>
<reference key="2">
    <citation type="journal article" date="2000" name="J. Biol. Chem.">
        <title>Identification of a highly diverged class of S-adenosylmethionine synthetases in the archaea.</title>
        <authorList>
            <person name="Graham D.E."/>
            <person name="Bock C.L."/>
            <person name="Schalk-Hihi C."/>
            <person name="Lu Z.J."/>
            <person name="Markham G.D."/>
        </authorList>
    </citation>
    <scope>PROTEIN SEQUENCE OF 3-43; 53-91; 132-178; 186-209; 213-225; 229-239; 250-269; 295-336 AND 347-379</scope>
    <scope>FUNCTION</scope>
    <scope>CATALYTIC ACTIVITY</scope>
    <scope>COFACTOR</scope>
    <scope>PATHWAY</scope>
    <scope>SUBUNIT</scope>
</reference>
<dbReference type="EC" id="2.5.1.6"/>
<dbReference type="EMBL" id="L77117">
    <property type="protein sequence ID" value="AAB99212.1"/>
    <property type="molecule type" value="Genomic_DNA"/>
</dbReference>
<dbReference type="PIR" id="G64450">
    <property type="entry name" value="G64450"/>
</dbReference>
<dbReference type="RefSeq" id="WP_010870720.1">
    <property type="nucleotide sequence ID" value="NC_000909.1"/>
</dbReference>
<dbReference type="PDB" id="7P82">
    <property type="method" value="X-ray"/>
    <property type="resolution" value="2.04 A"/>
    <property type="chains" value="A/C=1-406"/>
</dbReference>
<dbReference type="PDB" id="7P83">
    <property type="method" value="X-ray"/>
    <property type="resolution" value="2.22 A"/>
    <property type="chains" value="A/C=1-406"/>
</dbReference>
<dbReference type="PDB" id="7P84">
    <property type="method" value="X-ray"/>
    <property type="resolution" value="2.05 A"/>
    <property type="chains" value="A/C=1-406"/>
</dbReference>
<dbReference type="PDB" id="7P8M">
    <property type="method" value="X-ray"/>
    <property type="resolution" value="1.71 A"/>
    <property type="chains" value="A/C=1-406"/>
</dbReference>
<dbReference type="PDBsum" id="7P82"/>
<dbReference type="PDBsum" id="7P83"/>
<dbReference type="PDBsum" id="7P84"/>
<dbReference type="PDBsum" id="7P8M"/>
<dbReference type="SMR" id="Q58605"/>
<dbReference type="FunCoup" id="Q58605">
    <property type="interactions" value="206"/>
</dbReference>
<dbReference type="STRING" id="243232.MJ_1208"/>
<dbReference type="PaxDb" id="243232-MJ_1208"/>
<dbReference type="EnsemblBacteria" id="AAB99212">
    <property type="protein sequence ID" value="AAB99212"/>
    <property type="gene ID" value="MJ_1208"/>
</dbReference>
<dbReference type="GeneID" id="1452105"/>
<dbReference type="KEGG" id="mja:MJ_1208"/>
<dbReference type="eggNOG" id="arCOG01678">
    <property type="taxonomic scope" value="Archaea"/>
</dbReference>
<dbReference type="HOGENOM" id="CLU_057642_0_0_2"/>
<dbReference type="InParanoid" id="Q58605"/>
<dbReference type="OrthoDB" id="204488at2157"/>
<dbReference type="PhylomeDB" id="Q58605"/>
<dbReference type="BRENDA" id="2.5.1.6">
    <property type="organism ID" value="3260"/>
</dbReference>
<dbReference type="UniPathway" id="UPA00315">
    <property type="reaction ID" value="UER00080"/>
</dbReference>
<dbReference type="Proteomes" id="UP000000805">
    <property type="component" value="Chromosome"/>
</dbReference>
<dbReference type="GO" id="GO:0005524">
    <property type="term" value="F:ATP binding"/>
    <property type="evidence" value="ECO:0007669"/>
    <property type="project" value="UniProtKB-UniRule"/>
</dbReference>
<dbReference type="GO" id="GO:0000287">
    <property type="term" value="F:magnesium ion binding"/>
    <property type="evidence" value="ECO:0007669"/>
    <property type="project" value="UniProtKB-UniRule"/>
</dbReference>
<dbReference type="GO" id="GO:0004478">
    <property type="term" value="F:methionine adenosyltransferase activity"/>
    <property type="evidence" value="ECO:0007669"/>
    <property type="project" value="UniProtKB-UniRule"/>
</dbReference>
<dbReference type="GO" id="GO:0006730">
    <property type="term" value="P:one-carbon metabolic process"/>
    <property type="evidence" value="ECO:0007669"/>
    <property type="project" value="UniProtKB-KW"/>
</dbReference>
<dbReference type="GO" id="GO:0006556">
    <property type="term" value="P:S-adenosylmethionine biosynthetic process"/>
    <property type="evidence" value="ECO:0007669"/>
    <property type="project" value="UniProtKB-UniRule"/>
</dbReference>
<dbReference type="Gene3D" id="3.30.300.10">
    <property type="match status" value="1"/>
</dbReference>
<dbReference type="Gene3D" id="3.30.300.280">
    <property type="entry name" value="S-adenosylmethionine synthetase, C-terminal domain"/>
    <property type="match status" value="2"/>
</dbReference>
<dbReference type="HAMAP" id="MF_00136">
    <property type="entry name" value="S_AdoMet_synth2"/>
    <property type="match status" value="1"/>
</dbReference>
<dbReference type="InterPro" id="IPR027790">
    <property type="entry name" value="AdoMet_synthase_2_family"/>
</dbReference>
<dbReference type="InterPro" id="IPR042544">
    <property type="entry name" value="AdoMet_synthase_3"/>
</dbReference>
<dbReference type="InterPro" id="IPR002795">
    <property type="entry name" value="S-AdoMet_synthetase_arc"/>
</dbReference>
<dbReference type="NCBIfam" id="NF003364">
    <property type="entry name" value="PRK04439.1-3"/>
    <property type="match status" value="1"/>
</dbReference>
<dbReference type="NCBIfam" id="NF003366">
    <property type="entry name" value="PRK04439.1-5"/>
    <property type="match status" value="1"/>
</dbReference>
<dbReference type="PANTHER" id="PTHR36697">
    <property type="entry name" value="S-ADENOSYLMETHIONINE SYNTHASE"/>
    <property type="match status" value="1"/>
</dbReference>
<dbReference type="PANTHER" id="PTHR36697:SF1">
    <property type="entry name" value="S-ADENOSYLMETHIONINE SYNTHASE"/>
    <property type="match status" value="1"/>
</dbReference>
<dbReference type="Pfam" id="PF01941">
    <property type="entry name" value="AdoMet_Synthase"/>
    <property type="match status" value="1"/>
</dbReference>
<organism>
    <name type="scientific">Methanocaldococcus jannaschii (strain ATCC 43067 / DSM 2661 / JAL-1 / JCM 10045 / NBRC 100440)</name>
    <name type="common">Methanococcus jannaschii</name>
    <dbReference type="NCBI Taxonomy" id="243232"/>
    <lineage>
        <taxon>Archaea</taxon>
        <taxon>Methanobacteriati</taxon>
        <taxon>Methanobacteriota</taxon>
        <taxon>Methanomada group</taxon>
        <taxon>Methanococci</taxon>
        <taxon>Methanococcales</taxon>
        <taxon>Methanocaldococcaceae</taxon>
        <taxon>Methanocaldococcus</taxon>
    </lineage>
</organism>
<gene>
    <name type="primary">mat</name>
    <name type="ordered locus">MJ1208</name>
</gene>
<feature type="chain" id="PRO_0000150028" description="S-adenosylmethionine synthase">
    <location>
        <begin position="1"/>
        <end position="406"/>
    </location>
</feature>
<feature type="binding site" evidence="1">
    <location>
        <begin position="141"/>
        <end position="146"/>
    </location>
    <ligand>
        <name>ATP</name>
        <dbReference type="ChEBI" id="CHEBI:30616"/>
    </ligand>
</feature>
<feature type="strand" evidence="5">
    <location>
        <begin position="4"/>
        <end position="8"/>
    </location>
</feature>
<feature type="helix" evidence="5">
    <location>
        <begin position="14"/>
        <end position="16"/>
    </location>
</feature>
<feature type="strand" evidence="5">
    <location>
        <begin position="17"/>
        <end position="25"/>
    </location>
</feature>
<feature type="helix" evidence="5">
    <location>
        <begin position="30"/>
        <end position="53"/>
    </location>
</feature>
<feature type="strand" evidence="5">
    <location>
        <begin position="59"/>
        <end position="67"/>
    </location>
</feature>
<feature type="strand" evidence="5">
    <location>
        <begin position="70"/>
        <end position="72"/>
    </location>
</feature>
<feature type="strand" evidence="5">
    <location>
        <begin position="79"/>
        <end position="82"/>
    </location>
</feature>
<feature type="strand" evidence="5">
    <location>
        <begin position="84"/>
        <end position="92"/>
    </location>
</feature>
<feature type="strand" evidence="5">
    <location>
        <begin position="95"/>
        <end position="98"/>
    </location>
</feature>
<feature type="turn" evidence="5">
    <location>
        <begin position="99"/>
        <end position="102"/>
    </location>
</feature>
<feature type="strand" evidence="5">
    <location>
        <begin position="103"/>
        <end position="106"/>
    </location>
</feature>
<feature type="helix" evidence="5">
    <location>
        <begin position="109"/>
        <end position="124"/>
    </location>
</feature>
<feature type="turn" evidence="5">
    <location>
        <begin position="130"/>
        <end position="132"/>
    </location>
</feature>
<feature type="strand" evidence="5">
    <location>
        <begin position="133"/>
        <end position="138"/>
    </location>
</feature>
<feature type="helix" evidence="5">
    <location>
        <begin position="145"/>
        <end position="153"/>
    </location>
</feature>
<feature type="strand" evidence="4">
    <location>
        <begin position="155"/>
        <end position="158"/>
    </location>
</feature>
<feature type="strand" evidence="5">
    <location>
        <begin position="162"/>
        <end position="164"/>
    </location>
</feature>
<feature type="strand" evidence="5">
    <location>
        <begin position="166"/>
        <end position="172"/>
    </location>
</feature>
<feature type="helix" evidence="5">
    <location>
        <begin position="175"/>
        <end position="187"/>
    </location>
</feature>
<feature type="helix" evidence="5">
    <location>
        <begin position="190"/>
        <end position="195"/>
    </location>
</feature>
<feature type="strand" evidence="5">
    <location>
        <begin position="199"/>
        <end position="210"/>
    </location>
</feature>
<feature type="strand" evidence="5">
    <location>
        <begin position="213"/>
        <end position="223"/>
    </location>
</feature>
<feature type="helix" evidence="5">
    <location>
        <begin position="224"/>
        <end position="226"/>
    </location>
</feature>
<feature type="helix" evidence="5">
    <location>
        <begin position="230"/>
        <end position="251"/>
    </location>
</feature>
<feature type="strand" evidence="5">
    <location>
        <begin position="255"/>
        <end position="261"/>
    </location>
</feature>
<feature type="helix" evidence="5">
    <location>
        <begin position="267"/>
        <end position="269"/>
    </location>
</feature>
<feature type="strand" evidence="5">
    <location>
        <begin position="274"/>
        <end position="279"/>
    </location>
</feature>
<feature type="helix" evidence="5">
    <location>
        <begin position="280"/>
        <end position="283"/>
    </location>
</feature>
<feature type="turn" evidence="5">
    <location>
        <begin position="315"/>
        <end position="317"/>
    </location>
</feature>
<feature type="helix" evidence="5">
    <location>
        <begin position="319"/>
        <end position="335"/>
    </location>
</feature>
<feature type="strand" evidence="5">
    <location>
        <begin position="340"/>
        <end position="348"/>
    </location>
</feature>
<feature type="strand" evidence="5">
    <location>
        <begin position="359"/>
        <end position="367"/>
    </location>
</feature>
<feature type="helix" evidence="5">
    <location>
        <begin position="373"/>
        <end position="389"/>
    </location>
</feature>
<feature type="helix" evidence="5">
    <location>
        <begin position="392"/>
        <end position="399"/>
    </location>
</feature>
<protein>
    <recommendedName>
        <fullName>S-adenosylmethionine synthase</fullName>
        <shortName>AdoMet synthase</shortName>
        <ecNumber>2.5.1.6</ecNumber>
    </recommendedName>
    <alternativeName>
        <fullName>Methionine adenosyltransferase</fullName>
    </alternativeName>
</protein>
<evidence type="ECO:0000255" key="1"/>
<evidence type="ECO:0000269" key="2">
    <source>
    </source>
</evidence>
<evidence type="ECO:0000305" key="3"/>
<evidence type="ECO:0007829" key="4">
    <source>
        <dbReference type="PDB" id="7P82"/>
    </source>
</evidence>
<evidence type="ECO:0007829" key="5">
    <source>
        <dbReference type="PDB" id="7P8M"/>
    </source>
</evidence>
<keyword id="KW-0002">3D-structure</keyword>
<keyword id="KW-0067">ATP-binding</keyword>
<keyword id="KW-0903">Direct protein sequencing</keyword>
<keyword id="KW-0460">Magnesium</keyword>
<keyword id="KW-0547">Nucleotide-binding</keyword>
<keyword id="KW-0554">One-carbon metabolism</keyword>
<keyword id="KW-1185">Reference proteome</keyword>
<keyword id="KW-0808">Transferase</keyword>
<comment type="function">
    <text evidence="2">Catalyzes the formation of S-adenosylmethionine from methionine and ATP.</text>
</comment>
<comment type="catalytic activity">
    <reaction evidence="2">
        <text>L-methionine + ATP + H2O = S-adenosyl-L-methionine + phosphate + diphosphate</text>
        <dbReference type="Rhea" id="RHEA:21080"/>
        <dbReference type="ChEBI" id="CHEBI:15377"/>
        <dbReference type="ChEBI" id="CHEBI:30616"/>
        <dbReference type="ChEBI" id="CHEBI:33019"/>
        <dbReference type="ChEBI" id="CHEBI:43474"/>
        <dbReference type="ChEBI" id="CHEBI:57844"/>
        <dbReference type="ChEBI" id="CHEBI:59789"/>
        <dbReference type="EC" id="2.5.1.6"/>
    </reaction>
</comment>
<comment type="cofactor">
    <cofactor evidence="2">
        <name>Mg(2+)</name>
        <dbReference type="ChEBI" id="CHEBI:18420"/>
    </cofactor>
</comment>
<comment type="pathway">
    <text evidence="2">Amino-acid biosynthesis; S-adenosyl-L-methionine biosynthesis; S-adenosyl-L-methionine from L-methionine: step 1/1.</text>
</comment>
<comment type="subunit">
    <text evidence="2">Homodimer.</text>
</comment>
<comment type="similarity">
    <text evidence="3">Belongs to the AdoMet synthase 2 family.</text>
</comment>
<sequence length="406" mass="45252">MRNIIVKKLDVEPIEERPTEIVERKGLGHPDSICDGIAESVSRALCKMYMEKFGTILHHNTDQVELVGGHAYPKFGGGVMVSPIYILLSGRATMEILDKEKNEVIKLPVGTTAVKAAKEYLKKVLRNVDVDKDVIIDCRIGQGSMDLVDVFERQKNEVPLANDTSFGVGYAPLSTTERLVLETERFLNSDELKNEIPAVGEDIKVMGLREGKKITLTIAMAVVDRYVKNIEEYKEVIEKVRKKVEDLAKKIADGYEVEIHINTADDYERESVYLTVTGTSAEMGDDGSVGRGNRVNGLITPFRPMSMEAASGKNPVNHVGKIYNILANLIANDIAKLEGVKECYVRILSQIGKPINEPKALDIEIITEDSYDIKDIEPKAKEIANKWLDNIMEVQKMIVEGKVTTF</sequence>
<proteinExistence type="evidence at protein level"/>
<name>METK_METJA</name>
<accession>Q58605</accession>